<organism>
    <name type="scientific">Sendai virus (strain Z)</name>
    <name type="common">SeV</name>
    <name type="synonym">Sendai virus (strain HVJ)</name>
    <dbReference type="NCBI Taxonomy" id="11198"/>
    <lineage>
        <taxon>Viruses</taxon>
        <taxon>Riboviria</taxon>
        <taxon>Orthornavirae</taxon>
        <taxon>Negarnaviricota</taxon>
        <taxon>Haploviricotina</taxon>
        <taxon>Monjiviricetes</taxon>
        <taxon>Mononegavirales</taxon>
        <taxon>Paramyxoviridae</taxon>
        <taxon>Feraresvirinae</taxon>
        <taxon>Respirovirus</taxon>
        <taxon>Respirovirus muris</taxon>
    </lineage>
</organism>
<sequence length="215" mass="25189">MASATLTAWIKMPSFLKKILKLRGRRQEDESRSRMLSDSSMLSCRVNQLTSEGTEAGSTTPSTLPKDQALLIEPKVRAKEKSQHRRPKIIDQVRRVESLGEQASQRQKHMLETLINKIYTGPLGEELVQTLYLRIWAMEETPESLKILQMREDIRDQVLKMKTERWLRTLIRGEKTKLKDFQKRYEEVHPYLMKEKVEQVIMEEAWSLAAHIVQE</sequence>
<comment type="function">
    <text evidence="3 4 7 8 9 10 11 13">The different isoforms prevent the establishment of cellular antiviral state by blocking the interferon-alpha/beta (IFN-alpha/beta) and IFN-gamma signaling pathways. They inhibit IFN-alpha/beta induced tyrosine phosphorylation of STAT1 and STAT2. Blocking the IFN-alpha/beta pathway requires binding to STAT1 in the cytoplasm. They inhibit IFN-gamma induced serine phosphorylation of STAT1. Block the IFN-gamma pathway by binding to and stabilizing the parallel form of the STAT1 dimer, further inducing high-molecular-weight complex (HMWC) formation and inhibition of transcription by IFN-gamma. May also have a role in preventing the cell to enter apoptosis. Modulate regulation of viral transcription and replication. Overexpression inhibits the viral RNA polymerase. The absence of all C', C, Y1 and Y2 proteins leads to viral delayed growth. Plays an important role in virion particles release. Modulates virion shape.</text>
</comment>
<comment type="subunit">
    <text evidence="5 6 13 15">The different isoforms interact (via C-terminus) with unphosphorylated and phosphorylated human STAT1 (via N-terminus), favoring the formation of parallel STAT1 homodimers (PubMed:11442634, PubMed:26339056). The different isoforms do not interact with host STAT2 (PubMed:11442634, PubMed:26339056). C protein interacts with L protein; this interaction has an inhibitory effect on viral transcription and replication (PubMed:11543662, PubMed:9281506).</text>
</comment>
<comment type="interaction">
    <interactant intactId="EBI-8848010">
        <id>P04862</id>
    </interactant>
    <interactant intactId="EBI-646245">
        <id>Q60680</id>
        <label>Chuk</label>
    </interactant>
    <organismsDiffer>true</organismsDiffer>
    <experiments>2</experiments>
</comment>
<comment type="subcellular location">
    <molecule>Isoform C' protein</molecule>
    <subcellularLocation>
        <location evidence="12 14">Host cytoplasm</location>
    </subcellularLocation>
    <text evidence="14">Protein C' seems to localize around the Golgi.</text>
</comment>
<comment type="subcellular location">
    <molecule>Isoform C protein</molecule>
    <subcellularLocation>
        <location evidence="12 14">Host cytoplasm</location>
    </subcellularLocation>
    <subcellularLocation>
        <location>Virion</location>
    </subcellularLocation>
    <text evidence="12">The C protein is found in virion at a ratio of approximately 40 molecules per virion, presumably associated with the nucleocapsid.</text>
</comment>
<comment type="alternative products">
    <event type="alternative initiation"/>
    <isoform>
        <id>P04862-1</id>
        <name>C' protein</name>
        <sequence type="displayed"/>
    </isoform>
    <isoform>
        <id>P04862-2</id>
        <name>C protein</name>
        <sequence type="described" ref="VSP_018944"/>
    </isoform>
    <isoform>
        <id>P04862-3</id>
        <name>Y1 protein</name>
        <sequence type="described" ref="VSP_018945"/>
    </isoform>
    <isoform>
        <id>P04862-4</id>
        <name>Y2 protein</name>
        <sequence type="described" ref="VSP_018946"/>
    </isoform>
</comment>
<comment type="domain">
    <text evidence="2">The disordered region at the N-terminus is involved in C protein self-degradation in trans. This self-degradation of C protein may play a role in the regulation of viral RNA synthesis. The disordered region at the N-terminus is also involved in the host STAT1 degradation in order to counteract the host innate antiviral response.</text>
</comment>
<comment type="PTM">
    <text evidence="2">Y1 and Y2 proteins are produced not only by alternative initiation, but also by proteolytic cleavage of C'. Only alternative initiation is detected in vitro, whereas in vivo cleavage seems to be predominant.</text>
</comment>
<comment type="miscellaneous">
    <text evidence="16">The P/V/C gene has two overlapping open reading frames. One encodes the P/V/W proteins and the other the C/Y proteins.</text>
</comment>
<comment type="miscellaneous">
    <molecule>Isoform C' protein</molecule>
    <text>The initiator methionine is coded by an unusual start codon ACG.</text>
</comment>
<comment type="miscellaneous">
    <molecule>Isoform C protein</molecule>
    <text evidence="16">Most abundant isoform in infected cells.</text>
</comment>
<comment type="similarity">
    <text evidence="16">Belongs to the respirovirus protein C family.</text>
</comment>
<comment type="caution">
    <text evidence="16">The C' protein uses an unusual ACG start codon.</text>
</comment>
<reference key="1">
    <citation type="journal article" date="1983" name="Nucleic Acids Res.">
        <title>Sequence of 3,687 nucleotides from the 3' end of Sendai virus genome RNA and the predicted amino acid sequences of viral NP, P and C proteins.</title>
        <authorList>
            <person name="Shioda T."/>
            <person name="Hidaka Y."/>
            <person name="Kanda T."/>
            <person name="Shibuta H."/>
            <person name="Nomoto A."/>
            <person name="Iwasaki K."/>
        </authorList>
    </citation>
    <scope>NUCLEOTIDE SEQUENCE [GENOMIC RNA]</scope>
</reference>
<reference key="2">
    <citation type="journal article" date="1986" name="Virus Res.">
        <title>Localization and characterization of Sendai virus nonstructural C and C' proteins by antibodies against synthetic peptides.</title>
        <authorList>
            <person name="Portner A."/>
            <person name="Gupta K.C."/>
            <person name="Seyer J.M."/>
            <person name="Beachey E.H."/>
            <person name="Kingsbury D.W."/>
        </authorList>
    </citation>
    <scope>SUBCELLULAR LOCATION</scope>
</reference>
<reference key="3">
    <citation type="journal article" date="1990" name="Arch. Virol.">
        <title>Association of the Sendai virus C protein with nucleocapsids.</title>
        <authorList>
            <person name="Yamada H."/>
            <person name="Hayata S."/>
            <person name="Omata-Yamada T."/>
            <person name="Taira H."/>
            <person name="Mizumoto K."/>
            <person name="Iwasaki K."/>
        </authorList>
    </citation>
    <scope>SUBCELLULAR LOCATION</scope>
</reference>
<reference key="4">
    <citation type="journal article" date="1997" name="Virology">
        <title>The Sendai virus C protein binds the L polymerase protein to inhibit viral RNA synthesis.</title>
        <authorList>
            <person name="Horikami S.M."/>
            <person name="Hector R.E."/>
            <person name="Smallwood S."/>
            <person name="Moyer S.A."/>
        </authorList>
    </citation>
    <scope>INTERACTION WITH L PROTEIN</scope>
</reference>
<reference key="5">
    <citation type="journal article" date="2000" name="J. Virol.">
        <title>Versatility of the accessory C proteins of Sendai virus: contribution to virus assembly as an additional role.</title>
        <authorList>
            <person name="Hasan M.K."/>
            <person name="Kato A."/>
            <person name="Muranaka M."/>
            <person name="Yamaguchi R."/>
            <person name="Sakai Y."/>
            <person name="Hatano I."/>
            <person name="Tashiro M."/>
            <person name="Nagai Y."/>
        </authorList>
    </citation>
    <scope>FUNCTION</scope>
</reference>
<reference key="6">
    <citation type="journal article" date="2001" name="J. Virol.">
        <title>Y2, the smallest of the Sendai virus C proteins, is fully capable of both counteracting the antiviral action of interferons and inhibiting viral RNA synthesis.</title>
        <authorList>
            <person name="Kato A."/>
            <person name="Ohnishi Y."/>
            <person name="Kohase M."/>
            <person name="Saito S."/>
            <person name="Tashiro M."/>
            <person name="Nagai Y."/>
        </authorList>
    </citation>
    <scope>FUNCTION</scope>
</reference>
<reference key="7">
    <citation type="journal article" date="2001" name="Genes Cells">
        <title>Sendai virus C protein physically associates with Stat1.</title>
        <authorList>
            <person name="Takeuchi K."/>
            <person name="Komatsu T."/>
            <person name="Yokoo J."/>
            <person name="Kato A."/>
            <person name="Shioda T."/>
            <person name="Nagai Y."/>
            <person name="Gotoh B."/>
        </authorList>
    </citation>
    <scope>INTERACTION WITH HUMAN STAT1</scope>
</reference>
<reference key="8">
    <citation type="journal article" date="2001" name="Virology">
        <title>Sendai virus wild-type and mutant C proteins show a direct correlation between L polymerase binding and inhibition of viral RNA synthesis.</title>
        <authorList>
            <person name="Grogan C.C."/>
            <person name="Moyer S.A."/>
        </authorList>
    </citation>
    <scope>INTERACTION WITH L PROTEIN</scope>
    <scope>MUTAGENESIS OF 28-GLU--GLU-30; 88-LYS--ASP-91; 125-GLU-GLU-126; 140-GLU--GLU-143; 150-MET-ASP-153; 162-LYS--ARG-165; ARG-168; 172-ARG--GLU-174; PHE-181; 184-GLU--GLU-187 AND 203-GLU-GLU-204</scope>
</reference>
<reference key="9">
    <citation type="journal article" date="2002" name="FEBS Lett.">
        <title>Sendai virus C protein impairs both phosphorylation and dephosphorylation processes of Stat1.</title>
        <authorList>
            <person name="Komatsu T."/>
            <person name="Takeuchi K."/>
            <person name="Yokoo J."/>
            <person name="Gotoh B."/>
        </authorList>
    </citation>
    <scope>FUNCTION</scope>
</reference>
<reference key="10">
    <citation type="journal article" date="2003" name="Microbes Infect.">
        <title>Virus multiplication and induction of apoptosis by Sendai virus: role of the C proteins.</title>
        <authorList>
            <person name="Koyama A.H."/>
            <person name="Irie H."/>
            <person name="Kato A."/>
            <person name="Nagai Y."/>
            <person name="Adachi A."/>
        </authorList>
    </citation>
    <scope>FUNCTION</scope>
</reference>
<reference key="11">
    <citation type="journal article" date="2004" name="J. Virol.">
        <title>Characterization of the amino acid residues of Sendai virus C protein that are critically involved in its interferon antagonism and RNA synthesis down-regulation.</title>
        <authorList>
            <person name="Kato A."/>
            <person name="Cortese-Grogan C."/>
            <person name="Moyer S.A."/>
            <person name="Sugahara F."/>
            <person name="Sakaguchi T."/>
            <person name="Kubota T."/>
            <person name="Otsuki N."/>
            <person name="Kohase M."/>
            <person name="Tashiro M."/>
            <person name="Nagai Y."/>
        </authorList>
    </citation>
    <scope>FUNCTION</scope>
    <scope>MUTAGENESIS OF 88-LYS--ASP-91; 125-GLU-GLU-126; 150-MET-ASP-153; 162-LYS--ARG-165 AND 184-GLU--GLU-187</scope>
</reference>
<reference key="12">
    <citation type="journal article" date="2004" name="Virology">
        <title>Paramyxovirus Sendai virus-like particle formation by expression of multiple viral proteins and acceleration of its release by C protein.</title>
        <authorList>
            <person name="Sugahara F."/>
            <person name="Uchiyama T."/>
            <person name="Watanabe H."/>
            <person name="Shimazu Y."/>
            <person name="Kuwayama M."/>
            <person name="Fujii Y."/>
            <person name="Kiyotani K."/>
            <person name="Adachi A."/>
            <person name="Kohno N."/>
            <person name="Yoshida T."/>
            <person name="Sakaguchi T."/>
        </authorList>
    </citation>
    <scope>FUNCTION</scope>
</reference>
<reference key="13">
    <citation type="journal article" date="2004" name="FEBS Lett.">
        <title>Inhibition of the gamma interferon response by a Sendai virus C protein mutant with no STAT1-binding ability.</title>
        <authorList>
            <person name="Gotoh B."/>
            <person name="Takeuchi K."/>
            <person name="Komatsu T."/>
        </authorList>
    </citation>
    <scope>FUNCTION</scope>
    <scope>MUTAGENESIS OF PHE-181</scope>
</reference>
<reference evidence="17" key="14">
    <citation type="journal article" date="2015" name="J. Virol.">
        <title>Structural basis of the inhibition of STAT1 activity by Sendai virus C protein.</title>
        <authorList>
            <person name="Oda K."/>
            <person name="Matoba Y."/>
            <person name="Irie T."/>
            <person name="Kawabata R."/>
            <person name="Fukushi M."/>
            <person name="Sugiyama M."/>
            <person name="Sakaguchi T."/>
        </authorList>
    </citation>
    <scope>X-RAY CRYSTALLOGRAPHY (2.00 ANGSTROMS) OF 109-215</scope>
    <scope>INTERACTION WITH HUMAN STAT1</scope>
    <scope>FUNCTION</scope>
</reference>
<feature type="initiator methionine" description="Removed; by host" evidence="1">
    <location>
        <position position="1"/>
    </location>
</feature>
<feature type="chain" id="PRO_0000039411" description="C' protein">
    <location>
        <begin position="2"/>
        <end position="215"/>
    </location>
</feature>
<feature type="region of interest" description="Disordered" evidence="2">
    <location>
        <begin position="12"/>
        <end position="34"/>
    </location>
</feature>
<feature type="region of interest" description="Involved in self-degradation and in host STAT1 degradation" evidence="2">
    <location>
        <begin position="15"/>
        <end position="22"/>
    </location>
</feature>
<feature type="splice variant" id="VSP_018946" description="In isoform Y2 protein." evidence="16">
    <location>
        <begin position="1"/>
        <end position="40"/>
    </location>
</feature>
<feature type="splice variant" id="VSP_018945" description="In isoform Y1 protein." evidence="16">
    <location>
        <begin position="1"/>
        <end position="34"/>
    </location>
</feature>
<feature type="splice variant" id="VSP_018944" description="In isoform C protein." evidence="16">
    <location>
        <begin position="1"/>
        <end position="11"/>
    </location>
</feature>
<feature type="mutagenesis site" description="11% loss of binding to L protein in protein C'." evidence="6">
    <original>EDE</original>
    <variation>AAA</variation>
    <location>
        <begin position="28"/>
        <end position="30"/>
    </location>
</feature>
<feature type="mutagenesis site" description="Complete loss of STAT1-binding and RNA synthesis inhibition by C protein. 80% loss of binding to L protein in protein C'." evidence="6 10">
    <original>KIID</original>
    <variation>AIIA</variation>
    <location>
        <begin position="88"/>
        <end position="91"/>
    </location>
</feature>
<feature type="mutagenesis site" description="Complete loss of STAT1-binding in protein C. No effect on binding to L protein in protein C'." evidence="6 10">
    <original>EE</original>
    <variation>AA</variation>
    <location>
        <begin position="125"/>
        <end position="126"/>
    </location>
</feature>
<feature type="mutagenesis site" description="60% loss of binding to L protein in protein C'." evidence="6">
    <original>ETPE</original>
    <variation>ATPA</variation>
    <location>
        <begin position="140"/>
        <end position="143"/>
    </location>
</feature>
<feature type="mutagenesis site" description="Complete loss of STAT1-binding and RNA synthesis inhibition by C protein." evidence="6 10">
    <original>MRED</original>
    <variation>AREA</variation>
    <location>
        <begin position="150"/>
        <end position="153"/>
    </location>
</feature>
<feature type="mutagenesis site" description="Complete loss of STAT1-binding, anti-IFN activity and RNA synthesis inhibition by protein C. 67% loss of binding to L protein in C' protein." evidence="6 10">
    <original>KTER</original>
    <variation>ATAA</variation>
    <location>
        <begin position="162"/>
        <end position="165"/>
    </location>
</feature>
<feature type="mutagenesis site" description="63% loss of binding to L protein in protein C'." evidence="6">
    <original>R</original>
    <variation>A</variation>
    <location>
        <position position="168"/>
    </location>
</feature>
<feature type="mutagenesis site" description="10% loss of binding to L protein." evidence="6">
    <original>RGE</original>
    <variation>AGA</variation>
    <location>
        <begin position="172"/>
        <end position="174"/>
    </location>
</feature>
<feature type="mutagenesis site" description="Complete loss of STAT1-binding by C protein. 49% loss of binding to L protein." evidence="6 9">
    <original>F</original>
    <variation>S</variation>
    <location>
        <position position="181"/>
    </location>
</feature>
<feature type="mutagenesis site" description="Complete loss of STAT1-binding and RNA synthesis inhibition by C protein. 62% loss of binding to L protein." evidence="6 10">
    <original>RYEE</original>
    <variation>AYAA</variation>
    <location>
        <begin position="184"/>
        <end position="187"/>
    </location>
</feature>
<feature type="mutagenesis site" description="17% loss of binding to L protein." evidence="6">
    <original>EE</original>
    <variation>AA</variation>
    <location>
        <begin position="203"/>
        <end position="204"/>
    </location>
</feature>
<feature type="helix" evidence="18">
    <location>
        <begin position="109"/>
        <end position="120"/>
    </location>
</feature>
<feature type="helix" evidence="18">
    <location>
        <begin position="122"/>
        <end position="137"/>
    </location>
</feature>
<feature type="helix" evidence="18">
    <location>
        <begin position="142"/>
        <end position="148"/>
    </location>
</feature>
<feature type="helix" evidence="18">
    <location>
        <begin position="152"/>
        <end position="170"/>
    </location>
</feature>
<feature type="helix" evidence="18">
    <location>
        <begin position="178"/>
        <end position="180"/>
    </location>
</feature>
<feature type="helix" evidence="18">
    <location>
        <begin position="181"/>
        <end position="194"/>
    </location>
</feature>
<feature type="helix" evidence="18">
    <location>
        <begin position="196"/>
        <end position="210"/>
    </location>
</feature>
<evidence type="ECO:0000250" key="1"/>
<evidence type="ECO:0000250" key="2">
    <source>
        <dbReference type="UniProtKB" id="P04861"/>
    </source>
</evidence>
<evidence type="ECO:0000269" key="3">
    <source>
    </source>
</evidence>
<evidence type="ECO:0000269" key="4">
    <source>
    </source>
</evidence>
<evidence type="ECO:0000269" key="5">
    <source>
    </source>
</evidence>
<evidence type="ECO:0000269" key="6">
    <source>
    </source>
</evidence>
<evidence type="ECO:0000269" key="7">
    <source>
    </source>
</evidence>
<evidence type="ECO:0000269" key="8">
    <source>
    </source>
</evidence>
<evidence type="ECO:0000269" key="9">
    <source>
    </source>
</evidence>
<evidence type="ECO:0000269" key="10">
    <source>
    </source>
</evidence>
<evidence type="ECO:0000269" key="11">
    <source>
    </source>
</evidence>
<evidence type="ECO:0000269" key="12">
    <source>
    </source>
</evidence>
<evidence type="ECO:0000269" key="13">
    <source>
    </source>
</evidence>
<evidence type="ECO:0000269" key="14">
    <source>
    </source>
</evidence>
<evidence type="ECO:0000269" key="15">
    <source>
    </source>
</evidence>
<evidence type="ECO:0000305" key="16"/>
<evidence type="ECO:0007744" key="17">
    <source>
        <dbReference type="PDB" id="3WWT"/>
    </source>
</evidence>
<evidence type="ECO:0007829" key="18">
    <source>
        <dbReference type="PDB" id="3WWT"/>
    </source>
</evidence>
<name>C_SENDZ</name>
<keyword id="KW-0002">3D-structure</keyword>
<keyword id="KW-0024">Alternative initiation</keyword>
<keyword id="KW-1035">Host cytoplasm</keyword>
<keyword id="KW-0945">Host-virus interaction</keyword>
<keyword id="KW-1090">Inhibition of host innate immune response by virus</keyword>
<keyword id="KW-1114">Inhibition of host interferon signaling pathway by virus</keyword>
<keyword id="KW-1105">Inhibition of host STAT1 by virus</keyword>
<keyword id="KW-1106">Inhibition of host STAT2 by virus</keyword>
<keyword id="KW-0922">Interferon antiviral system evasion</keyword>
<keyword id="KW-0899">Viral immunoevasion</keyword>
<keyword id="KW-0946">Virion</keyword>
<dbReference type="EMBL" id="X00087">
    <property type="protein sequence ID" value="CAA24947.1"/>
    <property type="molecule type" value="Genomic_RNA"/>
</dbReference>
<dbReference type="PIR" id="A04041">
    <property type="entry name" value="MNNZSV"/>
</dbReference>
<dbReference type="PDB" id="3WWT">
    <property type="method" value="X-ray"/>
    <property type="resolution" value="2.00 A"/>
    <property type="chains" value="B=109-215"/>
</dbReference>
<dbReference type="PDB" id="6KP3">
    <property type="method" value="X-ray"/>
    <property type="resolution" value="2.20 A"/>
    <property type="chains" value="B=109-215"/>
</dbReference>
<dbReference type="PDBsum" id="3WWT"/>
<dbReference type="PDBsum" id="6KP3"/>
<dbReference type="SMR" id="P04862"/>
<dbReference type="IntAct" id="P04862">
    <property type="interactions" value="2"/>
</dbReference>
<dbReference type="MINT" id="P04862"/>
<dbReference type="Proteomes" id="UP000006560">
    <property type="component" value="Genome"/>
</dbReference>
<dbReference type="GO" id="GO:0030430">
    <property type="term" value="C:host cell cytoplasm"/>
    <property type="evidence" value="ECO:0007669"/>
    <property type="project" value="UniProtKB-SubCell"/>
</dbReference>
<dbReference type="GO" id="GO:0044423">
    <property type="term" value="C:virion component"/>
    <property type="evidence" value="ECO:0007669"/>
    <property type="project" value="UniProtKB-KW"/>
</dbReference>
<dbReference type="GO" id="GO:0052170">
    <property type="term" value="P:symbiont-mediated suppression of host innate immune response"/>
    <property type="evidence" value="ECO:0007669"/>
    <property type="project" value="UniProtKB-KW"/>
</dbReference>
<dbReference type="GO" id="GO:0039563">
    <property type="term" value="P:symbiont-mediated suppression of host JAK-STAT cascade via inhibition of STAT1 activity"/>
    <property type="evidence" value="ECO:0000314"/>
    <property type="project" value="UniProtKB"/>
</dbReference>
<dbReference type="GO" id="GO:0039564">
    <property type="term" value="P:symbiont-mediated suppression of host JAK-STAT cascade via inhibition of STAT2 activity"/>
    <property type="evidence" value="ECO:0007669"/>
    <property type="project" value="UniProtKB-KW"/>
</dbReference>
<dbReference type="GO" id="GO:0039502">
    <property type="term" value="P:symbiont-mediated suppression of host type I interferon-mediated signaling pathway"/>
    <property type="evidence" value="ECO:0007669"/>
    <property type="project" value="UniProtKB-KW"/>
</dbReference>
<dbReference type="InterPro" id="IPR002608">
    <property type="entry name" value="Paramyxo_C"/>
</dbReference>
<dbReference type="Pfam" id="PF01692">
    <property type="entry name" value="Paramyxo_C"/>
    <property type="match status" value="1"/>
</dbReference>
<protein>
    <recommendedName>
        <fullName>C' protein</fullName>
    </recommendedName>
</protein>
<gene>
    <name type="primary">P/V/C</name>
</gene>
<organismHost>
    <name type="scientific">Cavia cutleri</name>
    <name type="common">Guinea pig</name>
    <dbReference type="NCBI Taxonomy" id="10144"/>
</organismHost>
<organismHost>
    <name type="scientific">Cricetidae sp.</name>
    <name type="common">Hamster</name>
    <dbReference type="NCBI Taxonomy" id="36483"/>
</organismHost>
<organismHost>
    <name type="scientific">Mus musculus</name>
    <name type="common">Mouse</name>
    <dbReference type="NCBI Taxonomy" id="10090"/>
</organismHost>
<organismHost>
    <name type="scientific">Rattus norvegicus</name>
    <name type="common">Rat</name>
    <dbReference type="NCBI Taxonomy" id="10116"/>
</organismHost>
<proteinExistence type="evidence at protein level"/>
<accession>P04862</accession>